<comment type="function">
    <text evidence="1 6">Dopamine receptor responsible for neuronal signaling in the mesolimbic system of the brain, an area of the brain that regulates emotion and complex behavior. Activated by dopamine, but also by epinephrine and norepinephrine, and by numerous synthetic agonists and drugs. Agonist binding triggers signaling via G proteins that inhibit adenylyl cyclase (By similarity). Modulates the circadian rhythm of contrast sensitivity by regulating the rhythmic expression of NPAS2 in the retinal ganglion cells (PubMed:24048828).</text>
</comment>
<comment type="subunit">
    <text evidence="1 2">Forms homo- and heterooligomers with DRD2. D4.7 allele exhibits higher affinity for homodimers compared to DRD2 heterodimers, while alleles D42. and 4.4 have similar affinities for both. The interaction with DRD2 may modulate agonist-induced downstream signaling (By similarity). Interacts with CLIC6 (By similarity). Interacts with GPRASP1. May interact with ADORA2A. Interacts with KLHL12 (By similarity).</text>
</comment>
<comment type="subcellular location">
    <subcellularLocation>
        <location evidence="1">Cell membrane</location>
        <topology evidence="1">Multi-pass membrane protein</topology>
    </subcellularLocation>
</comment>
<comment type="tissue specificity">
    <text evidence="7">Detected in olfactory bulb, hypothalamus, olfactory tubercle, brainstem and striatum.</text>
</comment>
<comment type="PTM">
    <text evidence="1">Palmitoylated. Palmitoylation of the C-terminal Cys is important for normal expression at the cell membrane.</text>
</comment>
<comment type="disruption phenotype">
    <text evidence="6">Mice show a significant reduction in daytime contrast sensitivity.</text>
</comment>
<comment type="similarity">
    <text evidence="4">Belongs to the G-protein coupled receptor 1 family.</text>
</comment>
<comment type="caution">
    <text evidence="9">In contrast to human protein, does not interact with KLHL12 and is not ubiquitinated by the BCR(KLHL12) complex.</text>
</comment>
<keyword id="KW-0002">3D-structure</keyword>
<keyword id="KW-0090">Biological rhythms</keyword>
<keyword id="KW-1003">Cell membrane</keyword>
<keyword id="KW-1015">Disulfide bond</keyword>
<keyword id="KW-0297">G-protein coupled receptor</keyword>
<keyword id="KW-0325">Glycoprotein</keyword>
<keyword id="KW-0449">Lipoprotein</keyword>
<keyword id="KW-0472">Membrane</keyword>
<keyword id="KW-0479">Metal-binding</keyword>
<keyword id="KW-0564">Palmitate</keyword>
<keyword id="KW-0675">Receptor</keyword>
<keyword id="KW-1185">Reference proteome</keyword>
<keyword id="KW-0915">Sodium</keyword>
<keyword id="KW-0807">Transducer</keyword>
<keyword id="KW-0812">Transmembrane</keyword>
<keyword id="KW-1133">Transmembrane helix</keyword>
<accession>P51436</accession>
<accession>O35838</accession>
<accession>Q7TT80</accession>
<accession>Q8BXS4</accession>
<organism>
    <name type="scientific">Mus musculus</name>
    <name type="common">Mouse</name>
    <dbReference type="NCBI Taxonomy" id="10090"/>
    <lineage>
        <taxon>Eukaryota</taxon>
        <taxon>Metazoa</taxon>
        <taxon>Chordata</taxon>
        <taxon>Craniata</taxon>
        <taxon>Vertebrata</taxon>
        <taxon>Euteleostomi</taxon>
        <taxon>Mammalia</taxon>
        <taxon>Eutheria</taxon>
        <taxon>Euarchontoglires</taxon>
        <taxon>Glires</taxon>
        <taxon>Rodentia</taxon>
        <taxon>Myomorpha</taxon>
        <taxon>Muroidea</taxon>
        <taxon>Muridae</taxon>
        <taxon>Murinae</taxon>
        <taxon>Mus</taxon>
        <taxon>Mus</taxon>
    </lineage>
</organism>
<protein>
    <recommendedName>
        <fullName>D(4) dopamine receptor</fullName>
    </recommendedName>
    <alternativeName>
        <fullName>D(2C) dopamine receptor</fullName>
    </alternativeName>
    <alternativeName>
        <fullName>Dopamine D4 receptor</fullName>
    </alternativeName>
</protein>
<evidence type="ECO:0000250" key="1">
    <source>
        <dbReference type="UniProtKB" id="P21917"/>
    </source>
</evidence>
<evidence type="ECO:0000250" key="2">
    <source>
        <dbReference type="UniProtKB" id="P30729"/>
    </source>
</evidence>
<evidence type="ECO:0000255" key="3"/>
<evidence type="ECO:0000255" key="4">
    <source>
        <dbReference type="PROSITE-ProRule" id="PRU00521"/>
    </source>
</evidence>
<evidence type="ECO:0000256" key="5">
    <source>
        <dbReference type="SAM" id="MobiDB-lite"/>
    </source>
</evidence>
<evidence type="ECO:0000269" key="6">
    <source>
    </source>
</evidence>
<evidence type="ECO:0000269" key="7">
    <source>
    </source>
</evidence>
<evidence type="ECO:0000305" key="8"/>
<evidence type="ECO:0000305" key="9">
    <source>
    </source>
</evidence>
<evidence type="ECO:0007829" key="10">
    <source>
        <dbReference type="PDB" id="6IQL"/>
    </source>
</evidence>
<gene>
    <name type="primary">Drd4</name>
</gene>
<name>DRD4_MOUSE</name>
<proteinExistence type="evidence at protein level"/>
<reference key="1">
    <citation type="journal article" date="1995" name="FEBS Lett.">
        <title>Molecular cloning and characterisation of the gene encoding the murine D4 dopamine receptor.</title>
        <authorList>
            <person name="Fishburn C.S."/>
            <person name="Carmon S."/>
            <person name="Fuchs S."/>
        </authorList>
    </citation>
    <scope>NUCLEOTIDE SEQUENCE [GENOMIC DNA]</scope>
    <scope>TISSUE SPECIFICITY</scope>
    <source>
        <strain>129/Sv</strain>
    </source>
</reference>
<reference key="2">
    <citation type="journal article" date="1995" name="Neurosci. Lett.">
        <title>Genomic structure and tissue distribution of the mouse dopamine D4 receptor.</title>
        <authorList>
            <person name="Suzuki T."/>
            <person name="Kobayashi K."/>
            <person name="Nagatsu T."/>
        </authorList>
    </citation>
    <scope>NUCLEOTIDE SEQUENCE [GENOMIC DNA]</scope>
</reference>
<reference key="3">
    <citation type="journal article" date="2005" name="Science">
        <title>The transcriptional landscape of the mammalian genome.</title>
        <authorList>
            <person name="Carninci P."/>
            <person name="Kasukawa T."/>
            <person name="Katayama S."/>
            <person name="Gough J."/>
            <person name="Frith M.C."/>
            <person name="Maeda N."/>
            <person name="Oyama R."/>
            <person name="Ravasi T."/>
            <person name="Lenhard B."/>
            <person name="Wells C."/>
            <person name="Kodzius R."/>
            <person name="Shimokawa K."/>
            <person name="Bajic V.B."/>
            <person name="Brenner S.E."/>
            <person name="Batalov S."/>
            <person name="Forrest A.R."/>
            <person name="Zavolan M."/>
            <person name="Davis M.J."/>
            <person name="Wilming L.G."/>
            <person name="Aidinis V."/>
            <person name="Allen J.E."/>
            <person name="Ambesi-Impiombato A."/>
            <person name="Apweiler R."/>
            <person name="Aturaliya R.N."/>
            <person name="Bailey T.L."/>
            <person name="Bansal M."/>
            <person name="Baxter L."/>
            <person name="Beisel K.W."/>
            <person name="Bersano T."/>
            <person name="Bono H."/>
            <person name="Chalk A.M."/>
            <person name="Chiu K.P."/>
            <person name="Choudhary V."/>
            <person name="Christoffels A."/>
            <person name="Clutterbuck D.R."/>
            <person name="Crowe M.L."/>
            <person name="Dalla E."/>
            <person name="Dalrymple B.P."/>
            <person name="de Bono B."/>
            <person name="Della Gatta G."/>
            <person name="di Bernardo D."/>
            <person name="Down T."/>
            <person name="Engstrom P."/>
            <person name="Fagiolini M."/>
            <person name="Faulkner G."/>
            <person name="Fletcher C.F."/>
            <person name="Fukushima T."/>
            <person name="Furuno M."/>
            <person name="Futaki S."/>
            <person name="Gariboldi M."/>
            <person name="Georgii-Hemming P."/>
            <person name="Gingeras T.R."/>
            <person name="Gojobori T."/>
            <person name="Green R.E."/>
            <person name="Gustincich S."/>
            <person name="Harbers M."/>
            <person name="Hayashi Y."/>
            <person name="Hensch T.K."/>
            <person name="Hirokawa N."/>
            <person name="Hill D."/>
            <person name="Huminiecki L."/>
            <person name="Iacono M."/>
            <person name="Ikeo K."/>
            <person name="Iwama A."/>
            <person name="Ishikawa T."/>
            <person name="Jakt M."/>
            <person name="Kanapin A."/>
            <person name="Katoh M."/>
            <person name="Kawasawa Y."/>
            <person name="Kelso J."/>
            <person name="Kitamura H."/>
            <person name="Kitano H."/>
            <person name="Kollias G."/>
            <person name="Krishnan S.P."/>
            <person name="Kruger A."/>
            <person name="Kummerfeld S.K."/>
            <person name="Kurochkin I.V."/>
            <person name="Lareau L.F."/>
            <person name="Lazarevic D."/>
            <person name="Lipovich L."/>
            <person name="Liu J."/>
            <person name="Liuni S."/>
            <person name="McWilliam S."/>
            <person name="Madan Babu M."/>
            <person name="Madera M."/>
            <person name="Marchionni L."/>
            <person name="Matsuda H."/>
            <person name="Matsuzawa S."/>
            <person name="Miki H."/>
            <person name="Mignone F."/>
            <person name="Miyake S."/>
            <person name="Morris K."/>
            <person name="Mottagui-Tabar S."/>
            <person name="Mulder N."/>
            <person name="Nakano N."/>
            <person name="Nakauchi H."/>
            <person name="Ng P."/>
            <person name="Nilsson R."/>
            <person name="Nishiguchi S."/>
            <person name="Nishikawa S."/>
            <person name="Nori F."/>
            <person name="Ohara O."/>
            <person name="Okazaki Y."/>
            <person name="Orlando V."/>
            <person name="Pang K.C."/>
            <person name="Pavan W.J."/>
            <person name="Pavesi G."/>
            <person name="Pesole G."/>
            <person name="Petrovsky N."/>
            <person name="Piazza S."/>
            <person name="Reed J."/>
            <person name="Reid J.F."/>
            <person name="Ring B.Z."/>
            <person name="Ringwald M."/>
            <person name="Rost B."/>
            <person name="Ruan Y."/>
            <person name="Salzberg S.L."/>
            <person name="Sandelin A."/>
            <person name="Schneider C."/>
            <person name="Schoenbach C."/>
            <person name="Sekiguchi K."/>
            <person name="Semple C.A."/>
            <person name="Seno S."/>
            <person name="Sessa L."/>
            <person name="Sheng Y."/>
            <person name="Shibata Y."/>
            <person name="Shimada H."/>
            <person name="Shimada K."/>
            <person name="Silva D."/>
            <person name="Sinclair B."/>
            <person name="Sperling S."/>
            <person name="Stupka E."/>
            <person name="Sugiura K."/>
            <person name="Sultana R."/>
            <person name="Takenaka Y."/>
            <person name="Taki K."/>
            <person name="Tammoja K."/>
            <person name="Tan S.L."/>
            <person name="Tang S."/>
            <person name="Taylor M.S."/>
            <person name="Tegner J."/>
            <person name="Teichmann S.A."/>
            <person name="Ueda H.R."/>
            <person name="van Nimwegen E."/>
            <person name="Verardo R."/>
            <person name="Wei C.L."/>
            <person name="Yagi K."/>
            <person name="Yamanishi H."/>
            <person name="Zabarovsky E."/>
            <person name="Zhu S."/>
            <person name="Zimmer A."/>
            <person name="Hide W."/>
            <person name="Bult C."/>
            <person name="Grimmond S.M."/>
            <person name="Teasdale R.D."/>
            <person name="Liu E.T."/>
            <person name="Brusic V."/>
            <person name="Quackenbush J."/>
            <person name="Wahlestedt C."/>
            <person name="Mattick J.S."/>
            <person name="Hume D.A."/>
            <person name="Kai C."/>
            <person name="Sasaki D."/>
            <person name="Tomaru Y."/>
            <person name="Fukuda S."/>
            <person name="Kanamori-Katayama M."/>
            <person name="Suzuki M."/>
            <person name="Aoki J."/>
            <person name="Arakawa T."/>
            <person name="Iida J."/>
            <person name="Imamura K."/>
            <person name="Itoh M."/>
            <person name="Kato T."/>
            <person name="Kawaji H."/>
            <person name="Kawagashira N."/>
            <person name="Kawashima T."/>
            <person name="Kojima M."/>
            <person name="Kondo S."/>
            <person name="Konno H."/>
            <person name="Nakano K."/>
            <person name="Ninomiya N."/>
            <person name="Nishio T."/>
            <person name="Okada M."/>
            <person name="Plessy C."/>
            <person name="Shibata K."/>
            <person name="Shiraki T."/>
            <person name="Suzuki S."/>
            <person name="Tagami M."/>
            <person name="Waki K."/>
            <person name="Watahiki A."/>
            <person name="Okamura-Oho Y."/>
            <person name="Suzuki H."/>
            <person name="Kawai J."/>
            <person name="Hayashizaki Y."/>
        </authorList>
    </citation>
    <scope>NUCLEOTIDE SEQUENCE [LARGE SCALE MRNA]</scope>
    <source>
        <strain>C57BL/6J</strain>
        <tissue>Retina</tissue>
    </source>
</reference>
<reference key="4">
    <citation type="submission" date="2005-07" db="EMBL/GenBank/DDBJ databases">
        <authorList>
            <person name="Mural R.J."/>
            <person name="Adams M.D."/>
            <person name="Myers E.W."/>
            <person name="Smith H.O."/>
            <person name="Venter J.C."/>
        </authorList>
    </citation>
    <scope>NUCLEOTIDE SEQUENCE [LARGE SCALE GENOMIC DNA]</scope>
</reference>
<reference key="5">
    <citation type="journal article" date="2004" name="Genome Res.">
        <title>The status, quality, and expansion of the NIH full-length cDNA project: the Mammalian Gene Collection (MGC).</title>
        <authorList>
            <consortium name="The MGC Project Team"/>
        </authorList>
    </citation>
    <scope>NUCLEOTIDE SEQUENCE [LARGE SCALE MRNA]</scope>
    <source>
        <strain>C57BL/6J</strain>
        <tissue>Retina</tissue>
    </source>
</reference>
<reference key="6">
    <citation type="journal article" date="2008" name="J. Biol. Chem.">
        <title>BTB Protein KLHL12 targets the dopamine D4 receptor for ubiquitination by a Cul3-based E3 ligase.</title>
        <authorList>
            <person name="Rondou P."/>
            <person name="Haegeman G."/>
            <person name="Vanhoenacker P."/>
            <person name="Van Craenenbroeck K."/>
        </authorList>
    </citation>
    <scope>IDENTIFICATION</scope>
</reference>
<reference key="7">
    <citation type="journal article" date="2013" name="J. Neurosci.">
        <title>Circadian rhythm of contrast sensitivity is regulated by a dopamine-neuronal PAS-domain protein 2-adenylyl cyclase 1 signaling pathway in retinal ganglion cells.</title>
        <authorList>
            <person name="Hwang C.K."/>
            <person name="Chaurasia S.S."/>
            <person name="Jackson C.R."/>
            <person name="Chan G.C."/>
            <person name="Storm D.R."/>
            <person name="Iuvone P.M."/>
        </authorList>
    </citation>
    <scope>FUNCTION</scope>
    <scope>DISRUPTION PHENOTYPE</scope>
</reference>
<feature type="chain" id="PRO_0000069402" description="D(4) dopamine receptor">
    <location>
        <begin position="1"/>
        <end position="387"/>
    </location>
</feature>
<feature type="topological domain" description="Extracellular" evidence="1">
    <location>
        <begin position="1"/>
        <end position="34"/>
    </location>
</feature>
<feature type="transmembrane region" description="Helical; Name=1" evidence="1">
    <location>
        <begin position="35"/>
        <end position="57"/>
    </location>
</feature>
<feature type="topological domain" description="Cytoplasmic" evidence="1">
    <location>
        <begin position="58"/>
        <end position="67"/>
    </location>
</feature>
<feature type="transmembrane region" description="Helical; Name=2" evidence="1">
    <location>
        <begin position="68"/>
        <end position="90"/>
    </location>
</feature>
<feature type="topological domain" description="Extracellular" evidence="1">
    <location>
        <begin position="91"/>
        <end position="106"/>
    </location>
</feature>
<feature type="transmembrane region" description="Helical; Name=3" evidence="1">
    <location>
        <begin position="107"/>
        <end position="128"/>
    </location>
</feature>
<feature type="topological domain" description="Cytoplasmic" evidence="1">
    <location>
        <begin position="129"/>
        <end position="146"/>
    </location>
</feature>
<feature type="transmembrane region" description="Helical; Name=4" evidence="1">
    <location>
        <begin position="147"/>
        <end position="170"/>
    </location>
</feature>
<feature type="topological domain" description="Extracellular" evidence="1">
    <location>
        <begin position="171"/>
        <end position="186"/>
    </location>
</feature>
<feature type="transmembrane region" description="Helical; Name=5" evidence="1">
    <location>
        <begin position="187"/>
        <end position="208"/>
    </location>
</feature>
<feature type="topological domain" description="Cytoplasmic" evidence="1">
    <location>
        <begin position="209"/>
        <end position="314"/>
    </location>
</feature>
<feature type="transmembrane region" description="Helical; Name=6" evidence="1">
    <location>
        <begin position="315"/>
        <end position="337"/>
    </location>
</feature>
<feature type="topological domain" description="Extracellular" evidence="1">
    <location>
        <begin position="338"/>
        <end position="346"/>
    </location>
</feature>
<feature type="transmembrane region" description="Helical; Name=7" evidence="1">
    <location>
        <begin position="347"/>
        <end position="369"/>
    </location>
</feature>
<feature type="topological domain" description="Cytoplasmic" evidence="1">
    <location>
        <begin position="370"/>
        <end position="387"/>
    </location>
</feature>
<feature type="region of interest" description="Disordered" evidence="5">
    <location>
        <begin position="224"/>
        <end position="247"/>
    </location>
</feature>
<feature type="region of interest" description="Disordered" evidence="5">
    <location>
        <begin position="287"/>
        <end position="306"/>
    </location>
</feature>
<feature type="binding site" evidence="1">
    <location>
        <position position="77"/>
    </location>
    <ligand>
        <name>Na(+)</name>
        <dbReference type="ChEBI" id="CHEBI:29101"/>
    </ligand>
</feature>
<feature type="binding site" evidence="1">
    <location>
        <position position="119"/>
    </location>
    <ligand>
        <name>Na(+)</name>
        <dbReference type="ChEBI" id="CHEBI:29101"/>
    </ligand>
</feature>
<feature type="lipid moiety-binding region" description="S-palmitoyl cysteine" evidence="1">
    <location>
        <position position="387"/>
    </location>
</feature>
<feature type="glycosylation site" description="N-linked (GlcNAc...) asparagine" evidence="3">
    <location>
        <position position="3"/>
    </location>
</feature>
<feature type="disulfide bond" evidence="4">
    <location>
        <begin position="105"/>
        <end position="180"/>
    </location>
</feature>
<feature type="disulfide bond" evidence="1">
    <location>
        <begin position="340"/>
        <end position="343"/>
    </location>
</feature>
<feature type="sequence conflict" description="In Ref. 3; BAC31893." evidence="8" ref="3">
    <original>M</original>
    <variation>L</variation>
    <location>
        <position position="1"/>
    </location>
</feature>
<feature type="sequence conflict" description="In Ref. 3; BAC31893." evidence="8" ref="3">
    <original>E</original>
    <variation>K</variation>
    <location>
        <position position="19"/>
    </location>
</feature>
<feature type="sequence conflict" description="In Ref. 2; AAB50730." evidence="8" ref="2">
    <original>A</original>
    <variation>T</variation>
    <location>
        <position position="47"/>
    </location>
</feature>
<feature type="helix" evidence="10">
    <location>
        <begin position="33"/>
        <end position="46"/>
    </location>
</feature>
<feature type="helix" evidence="10">
    <location>
        <begin position="48"/>
        <end position="56"/>
    </location>
</feature>
<feature type="strand" evidence="10">
    <location>
        <begin position="60"/>
        <end position="62"/>
    </location>
</feature>
<feature type="helix" evidence="10">
    <location>
        <begin position="65"/>
        <end position="83"/>
    </location>
</feature>
<feature type="helix" evidence="10">
    <location>
        <begin position="85"/>
        <end position="93"/>
    </location>
</feature>
<feature type="helix" evidence="10">
    <location>
        <begin position="102"/>
        <end position="129"/>
    </location>
</feature>
<feature type="helix" evidence="10">
    <location>
        <begin position="148"/>
        <end position="155"/>
    </location>
</feature>
<feature type="helix" evidence="10">
    <location>
        <begin position="159"/>
        <end position="162"/>
    </location>
</feature>
<feature type="helix" evidence="10">
    <location>
        <begin position="166"/>
        <end position="171"/>
    </location>
</feature>
<feature type="turn" evidence="10">
    <location>
        <begin position="185"/>
        <end position="187"/>
    </location>
</feature>
<feature type="helix" evidence="10">
    <location>
        <begin position="188"/>
        <end position="193"/>
    </location>
</feature>
<feature type="turn" evidence="10">
    <location>
        <begin position="194"/>
        <end position="196"/>
    </location>
</feature>
<feature type="helix" evidence="10">
    <location>
        <begin position="197"/>
        <end position="219"/>
    </location>
</feature>
<feature type="helix" evidence="10">
    <location>
        <begin position="304"/>
        <end position="339"/>
    </location>
</feature>
<feature type="helix" evidence="10">
    <location>
        <begin position="347"/>
        <end position="367"/>
    </location>
</feature>
<feature type="turn" evidence="10">
    <location>
        <begin position="368"/>
        <end position="371"/>
    </location>
</feature>
<sequence length="387" mass="41487">MGNSSATEDGGLLAGRGPESLGTGAGLGGAGAAALVGGVLLIGLVLAGNSLVCVSVASERTLQTPTNYFIVSLAAADLLLAVLVLPLFVYSEVQGGVWLLSPRLCDTLMAMDVMLCTASIFNLCAISVDRFVAVTVPLRYNQQGQCQLLLIAATWLLSAAVASPVVCGLNDVPGRDPAVCCLENRDYVVYSSVCSFFLPCPLMLLLYWATFRGLRRWEAARHTKLHSRAPRRPSGPGPPVSDPTQGPFFPDCPPPLPSLRTSPSDSSRPESELSQRPCSPGCLLADAALPQPPEPSSRRRRGAKITGRERKAMRVLPVVVGAFLVCWTPFFVVHITRALCPACFVSPRLVSAVTWLGYVNSALNPIIYTIFNAEFRSVFRKTLRLRC</sequence>
<dbReference type="EMBL" id="U19880">
    <property type="protein sequence ID" value="AAC52190.1"/>
    <property type="molecule type" value="Genomic_DNA"/>
</dbReference>
<dbReference type="EMBL" id="S80929">
    <property type="protein sequence ID" value="AAB50730.1"/>
    <property type="molecule type" value="Genomic_DNA"/>
</dbReference>
<dbReference type="EMBL" id="S80920">
    <property type="protein sequence ID" value="AAB50730.1"/>
    <property type="status" value="JOINED"/>
    <property type="molecule type" value="Genomic_DNA"/>
</dbReference>
<dbReference type="EMBL" id="S80927">
    <property type="protein sequence ID" value="AAB50730.1"/>
    <property type="status" value="JOINED"/>
    <property type="molecule type" value="Genomic_DNA"/>
</dbReference>
<dbReference type="EMBL" id="S80928">
    <property type="protein sequence ID" value="AAB50730.1"/>
    <property type="status" value="JOINED"/>
    <property type="molecule type" value="Genomic_DNA"/>
</dbReference>
<dbReference type="EMBL" id="AK044379">
    <property type="protein sequence ID" value="BAC31893.1"/>
    <property type="molecule type" value="mRNA"/>
</dbReference>
<dbReference type="EMBL" id="CH466531">
    <property type="protein sequence ID" value="EDL18041.1"/>
    <property type="molecule type" value="Genomic_DNA"/>
</dbReference>
<dbReference type="EMBL" id="BC016086">
    <property type="protein sequence ID" value="AAH16086.1"/>
    <property type="molecule type" value="mRNA"/>
</dbReference>
<dbReference type="EMBL" id="BC051421">
    <property type="protein sequence ID" value="AAH51421.2"/>
    <property type="molecule type" value="mRNA"/>
</dbReference>
<dbReference type="CCDS" id="CCDS22007.1"/>
<dbReference type="PIR" id="I49246">
    <property type="entry name" value="I49246"/>
</dbReference>
<dbReference type="RefSeq" id="NP_031904.1">
    <property type="nucleotide sequence ID" value="NM_007878.4"/>
</dbReference>
<dbReference type="PDB" id="6IQL">
    <property type="method" value="X-ray"/>
    <property type="resolution" value="3.50 A"/>
    <property type="chains" value="A/B=23-219, A/B=304-387"/>
</dbReference>
<dbReference type="PDBsum" id="6IQL"/>
<dbReference type="SMR" id="P51436"/>
<dbReference type="DIP" id="DIP-61454N"/>
<dbReference type="FunCoup" id="P51436">
    <property type="interactions" value="498"/>
</dbReference>
<dbReference type="IntAct" id="P51436">
    <property type="interactions" value="3"/>
</dbReference>
<dbReference type="STRING" id="10090.ENSMUSP00000026569"/>
<dbReference type="BindingDB" id="P51436"/>
<dbReference type="ChEMBL" id="CHEMBL2574"/>
<dbReference type="DrugCentral" id="P51436"/>
<dbReference type="GlyCosmos" id="P51436">
    <property type="glycosylation" value="1 site, No reported glycans"/>
</dbReference>
<dbReference type="GlyGen" id="P51436">
    <property type="glycosylation" value="2 sites"/>
</dbReference>
<dbReference type="iPTMnet" id="P51436"/>
<dbReference type="PhosphoSitePlus" id="P51436"/>
<dbReference type="SwissPalm" id="P51436"/>
<dbReference type="PaxDb" id="10090-ENSMUSP00000026569"/>
<dbReference type="Antibodypedia" id="22579">
    <property type="antibodies" value="460 antibodies from 37 providers"/>
</dbReference>
<dbReference type="DNASU" id="13491"/>
<dbReference type="Ensembl" id="ENSMUST00000026569.6">
    <property type="protein sequence ID" value="ENSMUSP00000026569.5"/>
    <property type="gene ID" value="ENSMUSG00000025496.6"/>
</dbReference>
<dbReference type="GeneID" id="13491"/>
<dbReference type="KEGG" id="mmu:13491"/>
<dbReference type="UCSC" id="uc009kkm.1">
    <property type="organism name" value="mouse"/>
</dbReference>
<dbReference type="AGR" id="MGI:94926"/>
<dbReference type="CTD" id="1815"/>
<dbReference type="MGI" id="MGI:94926">
    <property type="gene designation" value="Drd4"/>
</dbReference>
<dbReference type="VEuPathDB" id="HostDB:ENSMUSG00000025496"/>
<dbReference type="eggNOG" id="KOG3656">
    <property type="taxonomic scope" value="Eukaryota"/>
</dbReference>
<dbReference type="GeneTree" id="ENSGT00940000160974"/>
<dbReference type="HOGENOM" id="CLU_009579_11_1_1"/>
<dbReference type="InParanoid" id="P51436"/>
<dbReference type="OMA" id="VVHITQA"/>
<dbReference type="OrthoDB" id="10010417at2759"/>
<dbReference type="PhylomeDB" id="P51436"/>
<dbReference type="TreeFam" id="TF334382"/>
<dbReference type="Reactome" id="R-MMU-390651">
    <property type="pathway name" value="Dopamine receptors"/>
</dbReference>
<dbReference type="Reactome" id="R-MMU-418594">
    <property type="pathway name" value="G alpha (i) signalling events"/>
</dbReference>
<dbReference type="BioGRID-ORCS" id="13491">
    <property type="hits" value="4 hits in 79 CRISPR screens"/>
</dbReference>
<dbReference type="ChiTaRS" id="Drd4">
    <property type="organism name" value="mouse"/>
</dbReference>
<dbReference type="PRO" id="PR:P51436"/>
<dbReference type="Proteomes" id="UP000000589">
    <property type="component" value="Chromosome 7"/>
</dbReference>
<dbReference type="RNAct" id="P51436">
    <property type="molecule type" value="protein"/>
</dbReference>
<dbReference type="Bgee" id="ENSMUSG00000025496">
    <property type="expression patterns" value="Expressed in retinal neural layer and 50 other cell types or tissues"/>
</dbReference>
<dbReference type="GO" id="GO:0005813">
    <property type="term" value="C:centrosome"/>
    <property type="evidence" value="ECO:0007669"/>
    <property type="project" value="Ensembl"/>
</dbReference>
<dbReference type="GO" id="GO:0098978">
    <property type="term" value="C:glutamatergic synapse"/>
    <property type="evidence" value="ECO:0000314"/>
    <property type="project" value="SynGO"/>
</dbReference>
<dbReference type="GO" id="GO:0005886">
    <property type="term" value="C:plasma membrane"/>
    <property type="evidence" value="ECO:0000250"/>
    <property type="project" value="UniProtKB"/>
</dbReference>
<dbReference type="GO" id="GO:0098794">
    <property type="term" value="C:postsynapse"/>
    <property type="evidence" value="ECO:0007669"/>
    <property type="project" value="GOC"/>
</dbReference>
<dbReference type="GO" id="GO:0035240">
    <property type="term" value="F:dopamine binding"/>
    <property type="evidence" value="ECO:0000250"/>
    <property type="project" value="UniProtKB"/>
</dbReference>
<dbReference type="GO" id="GO:0001591">
    <property type="term" value="F:dopamine neurotransmitter receptor activity, coupled via Gi/Go"/>
    <property type="evidence" value="ECO:0000315"/>
    <property type="project" value="MGI"/>
</dbReference>
<dbReference type="GO" id="GO:0051379">
    <property type="term" value="F:epinephrine binding"/>
    <property type="evidence" value="ECO:0007669"/>
    <property type="project" value="Ensembl"/>
</dbReference>
<dbReference type="GO" id="GO:0004930">
    <property type="term" value="F:G protein-coupled receptor activity"/>
    <property type="evidence" value="ECO:0007669"/>
    <property type="project" value="UniProtKB-KW"/>
</dbReference>
<dbReference type="GO" id="GO:0042802">
    <property type="term" value="F:identical protein binding"/>
    <property type="evidence" value="ECO:0007669"/>
    <property type="project" value="Ensembl"/>
</dbReference>
<dbReference type="GO" id="GO:0046872">
    <property type="term" value="F:metal ion binding"/>
    <property type="evidence" value="ECO:0007669"/>
    <property type="project" value="UniProtKB-KW"/>
</dbReference>
<dbReference type="GO" id="GO:0051380">
    <property type="term" value="F:norepinephrine binding"/>
    <property type="evidence" value="ECO:0007669"/>
    <property type="project" value="Ensembl"/>
</dbReference>
<dbReference type="GO" id="GO:0017124">
    <property type="term" value="F:SH3 domain binding"/>
    <property type="evidence" value="ECO:0007669"/>
    <property type="project" value="Ensembl"/>
</dbReference>
<dbReference type="GO" id="GO:0007195">
    <property type="term" value="P:adenylate cyclase-inhibiting dopamine receptor signaling pathway"/>
    <property type="evidence" value="ECO:0000315"/>
    <property type="project" value="MGI"/>
</dbReference>
<dbReference type="GO" id="GO:0008344">
    <property type="term" value="P:adult locomotory behavior"/>
    <property type="evidence" value="ECO:0000315"/>
    <property type="project" value="MGI"/>
</dbReference>
<dbReference type="GO" id="GO:0050482">
    <property type="term" value="P:arachidonate secretion"/>
    <property type="evidence" value="ECO:0007669"/>
    <property type="project" value="Ensembl"/>
</dbReference>
<dbReference type="GO" id="GO:0048148">
    <property type="term" value="P:behavioral response to cocaine"/>
    <property type="evidence" value="ECO:0000315"/>
    <property type="project" value="MGI"/>
</dbReference>
<dbReference type="GO" id="GO:0042596">
    <property type="term" value="P:fear response"/>
    <property type="evidence" value="ECO:0000315"/>
    <property type="project" value="MGI"/>
</dbReference>
<dbReference type="GO" id="GO:0060080">
    <property type="term" value="P:inhibitory postsynaptic potential"/>
    <property type="evidence" value="ECO:0000315"/>
    <property type="project" value="MGI"/>
</dbReference>
<dbReference type="GO" id="GO:0006874">
    <property type="term" value="P:intracellular calcium ion homeostasis"/>
    <property type="evidence" value="ECO:0007669"/>
    <property type="project" value="Ensembl"/>
</dbReference>
<dbReference type="GO" id="GO:0050709">
    <property type="term" value="P:negative regulation of protein secretion"/>
    <property type="evidence" value="ECO:0007669"/>
    <property type="project" value="Ensembl"/>
</dbReference>
<dbReference type="GO" id="GO:0060158">
    <property type="term" value="P:phospholipase C-activating dopamine receptor signaling pathway"/>
    <property type="evidence" value="ECO:0007669"/>
    <property type="project" value="Ensembl"/>
</dbReference>
<dbReference type="GO" id="GO:0042752">
    <property type="term" value="P:regulation of circadian rhythm"/>
    <property type="evidence" value="ECO:0000315"/>
    <property type="project" value="UniProtKB"/>
</dbReference>
<dbReference type="GO" id="GO:0042053">
    <property type="term" value="P:regulation of dopamine metabolic process"/>
    <property type="evidence" value="ECO:0000315"/>
    <property type="project" value="MGI"/>
</dbReference>
<dbReference type="GO" id="GO:0099149">
    <property type="term" value="P:regulation of postsynaptic neurotransmitter receptor internalization"/>
    <property type="evidence" value="ECO:0000314"/>
    <property type="project" value="SynGO"/>
</dbReference>
<dbReference type="GO" id="GO:0001975">
    <property type="term" value="P:response to amphetamine"/>
    <property type="evidence" value="ECO:0000315"/>
    <property type="project" value="MGI"/>
</dbReference>
<dbReference type="GO" id="GO:0034776">
    <property type="term" value="P:response to histamine"/>
    <property type="evidence" value="ECO:0007669"/>
    <property type="project" value="Ensembl"/>
</dbReference>
<dbReference type="GO" id="GO:0048511">
    <property type="term" value="P:rhythmic process"/>
    <property type="evidence" value="ECO:0007669"/>
    <property type="project" value="UniProtKB-KW"/>
</dbReference>
<dbReference type="FunFam" id="1.20.1070.10:FF:000362">
    <property type="entry name" value="D(4) dopamine receptor"/>
    <property type="match status" value="1"/>
</dbReference>
<dbReference type="FunFam" id="1.20.1070.10:FF:000361">
    <property type="entry name" value="Dopamine receptor D4"/>
    <property type="match status" value="1"/>
</dbReference>
<dbReference type="Gene3D" id="1.20.1070.10">
    <property type="entry name" value="Rhodopsin 7-helix transmembrane proteins"/>
    <property type="match status" value="1"/>
</dbReference>
<dbReference type="InterPro" id="IPR002185">
    <property type="entry name" value="Dopamine_D4_rcpt"/>
</dbReference>
<dbReference type="InterPro" id="IPR000929">
    <property type="entry name" value="Dopamine_rcpt"/>
</dbReference>
<dbReference type="InterPro" id="IPR000276">
    <property type="entry name" value="GPCR_Rhodpsn"/>
</dbReference>
<dbReference type="InterPro" id="IPR017452">
    <property type="entry name" value="GPCR_Rhodpsn_7TM"/>
</dbReference>
<dbReference type="PANTHER" id="PTHR24248">
    <property type="entry name" value="ADRENERGIC RECEPTOR-RELATED G-PROTEIN COUPLED RECEPTOR"/>
    <property type="match status" value="1"/>
</dbReference>
<dbReference type="PANTHER" id="PTHR24248:SF143">
    <property type="entry name" value="D(4) DOPAMINE RECEPTOR"/>
    <property type="match status" value="1"/>
</dbReference>
<dbReference type="Pfam" id="PF00001">
    <property type="entry name" value="7tm_1"/>
    <property type="match status" value="1"/>
</dbReference>
<dbReference type="PRINTS" id="PR00569">
    <property type="entry name" value="DOPAMINED4R"/>
</dbReference>
<dbReference type="PRINTS" id="PR00242">
    <property type="entry name" value="DOPAMINER"/>
</dbReference>
<dbReference type="PRINTS" id="PR00237">
    <property type="entry name" value="GPCRRHODOPSN"/>
</dbReference>
<dbReference type="SMART" id="SM01381">
    <property type="entry name" value="7TM_GPCR_Srsx"/>
    <property type="match status" value="1"/>
</dbReference>
<dbReference type="SUPFAM" id="SSF81321">
    <property type="entry name" value="Family A G protein-coupled receptor-like"/>
    <property type="match status" value="1"/>
</dbReference>
<dbReference type="PROSITE" id="PS00237">
    <property type="entry name" value="G_PROTEIN_RECEP_F1_1"/>
    <property type="match status" value="1"/>
</dbReference>
<dbReference type="PROSITE" id="PS50262">
    <property type="entry name" value="G_PROTEIN_RECEP_F1_2"/>
    <property type="match status" value="1"/>
</dbReference>